<feature type="chain" id="PRO_1000004357" description="UDP-N-acetylmuramate--L-alanine ligase">
    <location>
        <begin position="1"/>
        <end position="439"/>
    </location>
</feature>
<feature type="binding site" evidence="1">
    <location>
        <begin position="113"/>
        <end position="119"/>
    </location>
    <ligand>
        <name>ATP</name>
        <dbReference type="ChEBI" id="CHEBI:30616"/>
    </ligand>
</feature>
<keyword id="KW-0067">ATP-binding</keyword>
<keyword id="KW-0131">Cell cycle</keyword>
<keyword id="KW-0132">Cell division</keyword>
<keyword id="KW-0133">Cell shape</keyword>
<keyword id="KW-0961">Cell wall biogenesis/degradation</keyword>
<keyword id="KW-0963">Cytoplasm</keyword>
<keyword id="KW-0436">Ligase</keyword>
<keyword id="KW-0547">Nucleotide-binding</keyword>
<keyword id="KW-0573">Peptidoglycan synthesis</keyword>
<evidence type="ECO:0000255" key="1">
    <source>
        <dbReference type="HAMAP-Rule" id="MF_00046"/>
    </source>
</evidence>
<protein>
    <recommendedName>
        <fullName evidence="1">UDP-N-acetylmuramate--L-alanine ligase</fullName>
        <ecNumber evidence="1">6.3.2.8</ecNumber>
    </recommendedName>
    <alternativeName>
        <fullName evidence="1">UDP-N-acetylmuramoyl-L-alanine synthetase</fullName>
    </alternativeName>
</protein>
<comment type="function">
    <text evidence="1">Cell wall formation.</text>
</comment>
<comment type="catalytic activity">
    <reaction evidence="1">
        <text>UDP-N-acetyl-alpha-D-muramate + L-alanine + ATP = UDP-N-acetyl-alpha-D-muramoyl-L-alanine + ADP + phosphate + H(+)</text>
        <dbReference type="Rhea" id="RHEA:23372"/>
        <dbReference type="ChEBI" id="CHEBI:15378"/>
        <dbReference type="ChEBI" id="CHEBI:30616"/>
        <dbReference type="ChEBI" id="CHEBI:43474"/>
        <dbReference type="ChEBI" id="CHEBI:57972"/>
        <dbReference type="ChEBI" id="CHEBI:70757"/>
        <dbReference type="ChEBI" id="CHEBI:83898"/>
        <dbReference type="ChEBI" id="CHEBI:456216"/>
        <dbReference type="EC" id="6.3.2.8"/>
    </reaction>
</comment>
<comment type="pathway">
    <text evidence="1">Cell wall biogenesis; peptidoglycan biosynthesis.</text>
</comment>
<comment type="subcellular location">
    <subcellularLocation>
        <location evidence="1">Cytoplasm</location>
    </subcellularLocation>
</comment>
<comment type="similarity">
    <text evidence="1">Belongs to the MurCDEF family.</text>
</comment>
<reference key="1">
    <citation type="journal article" date="2006" name="Proc. Natl. Acad. Sci. U.S.A.">
        <title>Comparative genomics of the lactic acid bacteria.</title>
        <authorList>
            <person name="Makarova K.S."/>
            <person name="Slesarev A."/>
            <person name="Wolf Y.I."/>
            <person name="Sorokin A."/>
            <person name="Mirkin B."/>
            <person name="Koonin E.V."/>
            <person name="Pavlov A."/>
            <person name="Pavlova N."/>
            <person name="Karamychev V."/>
            <person name="Polouchine N."/>
            <person name="Shakhova V."/>
            <person name="Grigoriev I."/>
            <person name="Lou Y."/>
            <person name="Rohksar D."/>
            <person name="Lucas S."/>
            <person name="Huang K."/>
            <person name="Goodstein D.M."/>
            <person name="Hawkins T."/>
            <person name="Plengvidhya V."/>
            <person name="Welker D."/>
            <person name="Hughes J."/>
            <person name="Goh Y."/>
            <person name="Benson A."/>
            <person name="Baldwin K."/>
            <person name="Lee J.-H."/>
            <person name="Diaz-Muniz I."/>
            <person name="Dosti B."/>
            <person name="Smeianov V."/>
            <person name="Wechter W."/>
            <person name="Barabote R."/>
            <person name="Lorca G."/>
            <person name="Altermann E."/>
            <person name="Barrangou R."/>
            <person name="Ganesan B."/>
            <person name="Xie Y."/>
            <person name="Rawsthorne H."/>
            <person name="Tamir D."/>
            <person name="Parker C."/>
            <person name="Breidt F."/>
            <person name="Broadbent J.R."/>
            <person name="Hutkins R."/>
            <person name="O'Sullivan D."/>
            <person name="Steele J."/>
            <person name="Unlu G."/>
            <person name="Saier M.H. Jr."/>
            <person name="Klaenhammer T."/>
            <person name="Richardson P."/>
            <person name="Kozyavkin S."/>
            <person name="Weimer B.C."/>
            <person name="Mills D.A."/>
        </authorList>
    </citation>
    <scope>NUCLEOTIDE SEQUENCE [LARGE SCALE GENOMIC DNA]</scope>
    <source>
        <strain>ATCC BAA-365 / Lb-18</strain>
    </source>
</reference>
<sequence length="439" mass="48866">MLDKTKQIWFIGIKGTGMASLALILHDLGYKVAGSDIDKYTFTQDPLEAAGIEVASFSKDNIKESGQVIVKGNAFKSDNIEVAACEEKGVKWQSYPDTVEEIVQQYTSIGVAGSHGKTSTTGLLATVLGEAAPTSFLIGDGMGKGVKDSRFFVYEADEYRRHFLAYHPDYQIMTNVDFDHPDYFKDRDDYASAFQTAADQTKKGLFVWGDDERLQKIHPKTAKKYTYGLKDSDDFQAFDVVKTTEGAKFHVRANGEDLGEFTIHLFGDHNVMNATAVIAIAFTEGIDLDVVRKGLVKYTGAKRRFSEKDFGDTVVIDDYAHHPTELRATIQAARQKFPDRKLVTIFQPHTYSRTKEFEEEYVEILKGVDKAFLTPIYGSAREAAGDIKSEDIASQIPGAEVIDFDNLKDLLAYKGDCIVFMGAGDIPKYEVAFEEMLGK</sequence>
<gene>
    <name evidence="1" type="primary">murC</name>
    <name type="ordered locus">LBUL_1413</name>
</gene>
<proteinExistence type="inferred from homology"/>
<dbReference type="EC" id="6.3.2.8" evidence="1"/>
<dbReference type="EMBL" id="CP000412">
    <property type="protein sequence ID" value="ABJ58923.1"/>
    <property type="molecule type" value="Genomic_DNA"/>
</dbReference>
<dbReference type="RefSeq" id="WP_003618364.1">
    <property type="nucleotide sequence ID" value="NC_008529.1"/>
</dbReference>
<dbReference type="SMR" id="Q049E9"/>
<dbReference type="KEGG" id="lbu:LBUL_1413"/>
<dbReference type="HOGENOM" id="CLU_028104_1_0_9"/>
<dbReference type="BioCyc" id="LDEL321956:LBUL_RS06660-MONOMER"/>
<dbReference type="UniPathway" id="UPA00219"/>
<dbReference type="GO" id="GO:0005737">
    <property type="term" value="C:cytoplasm"/>
    <property type="evidence" value="ECO:0007669"/>
    <property type="project" value="UniProtKB-SubCell"/>
</dbReference>
<dbReference type="GO" id="GO:0005524">
    <property type="term" value="F:ATP binding"/>
    <property type="evidence" value="ECO:0007669"/>
    <property type="project" value="UniProtKB-UniRule"/>
</dbReference>
<dbReference type="GO" id="GO:0008763">
    <property type="term" value="F:UDP-N-acetylmuramate-L-alanine ligase activity"/>
    <property type="evidence" value="ECO:0007669"/>
    <property type="project" value="UniProtKB-UniRule"/>
</dbReference>
<dbReference type="GO" id="GO:0051301">
    <property type="term" value="P:cell division"/>
    <property type="evidence" value="ECO:0007669"/>
    <property type="project" value="UniProtKB-KW"/>
</dbReference>
<dbReference type="GO" id="GO:0071555">
    <property type="term" value="P:cell wall organization"/>
    <property type="evidence" value="ECO:0007669"/>
    <property type="project" value="UniProtKB-KW"/>
</dbReference>
<dbReference type="GO" id="GO:0009252">
    <property type="term" value="P:peptidoglycan biosynthetic process"/>
    <property type="evidence" value="ECO:0007669"/>
    <property type="project" value="UniProtKB-UniRule"/>
</dbReference>
<dbReference type="GO" id="GO:0008360">
    <property type="term" value="P:regulation of cell shape"/>
    <property type="evidence" value="ECO:0007669"/>
    <property type="project" value="UniProtKB-KW"/>
</dbReference>
<dbReference type="Gene3D" id="3.90.190.20">
    <property type="entry name" value="Mur ligase, C-terminal domain"/>
    <property type="match status" value="1"/>
</dbReference>
<dbReference type="Gene3D" id="3.40.1190.10">
    <property type="entry name" value="Mur-like, catalytic domain"/>
    <property type="match status" value="1"/>
</dbReference>
<dbReference type="Gene3D" id="3.40.50.720">
    <property type="entry name" value="NAD(P)-binding Rossmann-like Domain"/>
    <property type="match status" value="1"/>
</dbReference>
<dbReference type="HAMAP" id="MF_00046">
    <property type="entry name" value="MurC"/>
    <property type="match status" value="1"/>
</dbReference>
<dbReference type="InterPro" id="IPR036565">
    <property type="entry name" value="Mur-like_cat_sf"/>
</dbReference>
<dbReference type="InterPro" id="IPR004101">
    <property type="entry name" value="Mur_ligase_C"/>
</dbReference>
<dbReference type="InterPro" id="IPR036615">
    <property type="entry name" value="Mur_ligase_C_dom_sf"/>
</dbReference>
<dbReference type="InterPro" id="IPR013221">
    <property type="entry name" value="Mur_ligase_cen"/>
</dbReference>
<dbReference type="InterPro" id="IPR000713">
    <property type="entry name" value="Mur_ligase_N"/>
</dbReference>
<dbReference type="InterPro" id="IPR050061">
    <property type="entry name" value="MurCDEF_pg_biosynth"/>
</dbReference>
<dbReference type="InterPro" id="IPR005758">
    <property type="entry name" value="UDP-N-AcMur_Ala_ligase_MurC"/>
</dbReference>
<dbReference type="NCBIfam" id="TIGR01082">
    <property type="entry name" value="murC"/>
    <property type="match status" value="1"/>
</dbReference>
<dbReference type="PANTHER" id="PTHR43445:SF3">
    <property type="entry name" value="UDP-N-ACETYLMURAMATE--L-ALANINE LIGASE"/>
    <property type="match status" value="1"/>
</dbReference>
<dbReference type="PANTHER" id="PTHR43445">
    <property type="entry name" value="UDP-N-ACETYLMURAMATE--L-ALANINE LIGASE-RELATED"/>
    <property type="match status" value="1"/>
</dbReference>
<dbReference type="Pfam" id="PF01225">
    <property type="entry name" value="Mur_ligase"/>
    <property type="match status" value="1"/>
</dbReference>
<dbReference type="Pfam" id="PF02875">
    <property type="entry name" value="Mur_ligase_C"/>
    <property type="match status" value="1"/>
</dbReference>
<dbReference type="Pfam" id="PF08245">
    <property type="entry name" value="Mur_ligase_M"/>
    <property type="match status" value="1"/>
</dbReference>
<dbReference type="SUPFAM" id="SSF51984">
    <property type="entry name" value="MurCD N-terminal domain"/>
    <property type="match status" value="1"/>
</dbReference>
<dbReference type="SUPFAM" id="SSF53623">
    <property type="entry name" value="MurD-like peptide ligases, catalytic domain"/>
    <property type="match status" value="1"/>
</dbReference>
<dbReference type="SUPFAM" id="SSF53244">
    <property type="entry name" value="MurD-like peptide ligases, peptide-binding domain"/>
    <property type="match status" value="1"/>
</dbReference>
<accession>Q049E9</accession>
<name>MURC_LACDB</name>
<organism>
    <name type="scientific">Lactobacillus delbrueckii subsp. bulgaricus (strain ATCC BAA-365 / Lb-18)</name>
    <dbReference type="NCBI Taxonomy" id="321956"/>
    <lineage>
        <taxon>Bacteria</taxon>
        <taxon>Bacillati</taxon>
        <taxon>Bacillota</taxon>
        <taxon>Bacilli</taxon>
        <taxon>Lactobacillales</taxon>
        <taxon>Lactobacillaceae</taxon>
        <taxon>Lactobacillus</taxon>
    </lineage>
</organism>